<evidence type="ECO:0000255" key="1">
    <source>
        <dbReference type="PROSITE-ProRule" id="PRU00099"/>
    </source>
</evidence>
<evidence type="ECO:0000256" key="2">
    <source>
        <dbReference type="SAM" id="MobiDB-lite"/>
    </source>
</evidence>
<reference key="1">
    <citation type="journal article" date="1990" name="FEBS Lett.">
        <title>The primary structure of the larger subunit of soluble guanylyl cyclase from bovine lung. Homology between the two subunits of the enzyme.</title>
        <authorList>
            <person name="Koesling D."/>
            <person name="Harteneck C."/>
            <person name="Humbert P."/>
            <person name="Bosserhoff A."/>
            <person name="Frank R."/>
            <person name="Schultz G."/>
            <person name="Boehme E."/>
        </authorList>
    </citation>
    <scope>NUCLEOTIDE SEQUENCE [MRNA]</scope>
    <scope>PARTIAL PROTEIN SEQUENCE</scope>
    <source>
        <tissue>Adrenal medulla</tissue>
    </source>
</reference>
<reference key="2">
    <citation type="journal article" date="1997" name="Proc. Natl. Acad. Sci. U.S.A.">
        <title>Catalytic mechanism of the adenylyl and guanylyl cyclases: modeling and mutational analysis.</title>
        <authorList>
            <person name="Liu Y."/>
            <person name="Ruoho A.E."/>
            <person name="Rao V.D."/>
            <person name="Hurley J.H."/>
        </authorList>
    </citation>
    <scope>3D-STRUCTURE MODELING OF 472-628</scope>
</reference>
<protein>
    <recommendedName>
        <fullName>Guanylate cyclase soluble subunit alpha-1</fullName>
        <shortName>GCS-alpha-1</shortName>
        <ecNumber>4.6.1.2</ecNumber>
    </recommendedName>
    <alternativeName>
        <fullName>Soluble guanylate cyclase large subunit</fullName>
    </alternativeName>
</protein>
<dbReference type="EC" id="4.6.1.2"/>
<dbReference type="EMBL" id="X54014">
    <property type="protein sequence ID" value="CAA37960.1"/>
    <property type="molecule type" value="mRNA"/>
</dbReference>
<dbReference type="PIR" id="S10713">
    <property type="entry name" value="OYBO77"/>
</dbReference>
<dbReference type="RefSeq" id="NP_786972.1">
    <property type="nucleotide sequence ID" value="NM_175778.2"/>
</dbReference>
<dbReference type="RefSeq" id="XP_005217697.1">
    <property type="nucleotide sequence ID" value="XM_005217640.5"/>
</dbReference>
<dbReference type="RefSeq" id="XP_005217698.1">
    <property type="nucleotide sequence ID" value="XM_005217641.5"/>
</dbReference>
<dbReference type="RefSeq" id="XP_005217699.1">
    <property type="nucleotide sequence ID" value="XM_005217642.5"/>
</dbReference>
<dbReference type="RefSeq" id="XP_005217700.1">
    <property type="nucleotide sequence ID" value="XM_005217643.5"/>
</dbReference>
<dbReference type="RefSeq" id="XP_010812116.1">
    <property type="nucleotide sequence ID" value="XM_010813814.2"/>
</dbReference>
<dbReference type="RefSeq" id="XP_015330913.1">
    <property type="nucleotide sequence ID" value="XM_015475427.1"/>
</dbReference>
<dbReference type="RefSeq" id="XP_024832768.1">
    <property type="nucleotide sequence ID" value="XM_024977000.2"/>
</dbReference>
<dbReference type="RefSeq" id="XP_024832769.1">
    <property type="nucleotide sequence ID" value="XM_024977001.2"/>
</dbReference>
<dbReference type="RefSeq" id="XP_059731851.1">
    <property type="nucleotide sequence ID" value="XM_059875868.1"/>
</dbReference>
<dbReference type="RefSeq" id="XP_059731852.1">
    <property type="nucleotide sequence ID" value="XM_059875869.1"/>
</dbReference>
<dbReference type="SMR" id="P19687"/>
<dbReference type="FunCoup" id="P19687">
    <property type="interactions" value="936"/>
</dbReference>
<dbReference type="STRING" id="9913.ENSBTAP00000064987"/>
<dbReference type="ChEMBL" id="CHEMBL3915"/>
<dbReference type="PaxDb" id="9913-ENSBTAP00000019398"/>
<dbReference type="Ensembl" id="ENSBTAT00000074007.1">
    <property type="protein sequence ID" value="ENSBTAP00000064987.1"/>
    <property type="gene ID" value="ENSBTAG00000014576.6"/>
</dbReference>
<dbReference type="GeneID" id="281216"/>
<dbReference type="KEGG" id="bta:281216"/>
<dbReference type="CTD" id="2982"/>
<dbReference type="VEuPathDB" id="HostDB:ENSBTAG00000014576"/>
<dbReference type="VGNC" id="VGNC:29720">
    <property type="gene designation" value="GUCY1A1"/>
</dbReference>
<dbReference type="eggNOG" id="KOG4171">
    <property type="taxonomic scope" value="Eukaryota"/>
</dbReference>
<dbReference type="GeneTree" id="ENSGT00940000158285"/>
<dbReference type="HOGENOM" id="CLU_011614_5_1_1"/>
<dbReference type="InParanoid" id="P19687"/>
<dbReference type="OMA" id="NANFFGE"/>
<dbReference type="OrthoDB" id="6127067at2759"/>
<dbReference type="TreeFam" id="TF351403"/>
<dbReference type="BRENDA" id="4.6.1.2">
    <property type="organism ID" value="908"/>
</dbReference>
<dbReference type="Reactome" id="R-BTA-445355">
    <property type="pathway name" value="Smooth Muscle Contraction"/>
</dbReference>
<dbReference type="Proteomes" id="UP000009136">
    <property type="component" value="Chromosome 17"/>
</dbReference>
<dbReference type="Bgee" id="ENSBTAG00000014576">
    <property type="expression patterns" value="Expressed in oviduct epithelium and 106 other cell types or tissues"/>
</dbReference>
<dbReference type="GO" id="GO:0008074">
    <property type="term" value="C:guanylate cyclase complex, soluble"/>
    <property type="evidence" value="ECO:0000318"/>
    <property type="project" value="GO_Central"/>
</dbReference>
<dbReference type="GO" id="GO:0005525">
    <property type="term" value="F:GTP binding"/>
    <property type="evidence" value="ECO:0007669"/>
    <property type="project" value="UniProtKB-KW"/>
</dbReference>
<dbReference type="GO" id="GO:0004383">
    <property type="term" value="F:guanylate cyclase activity"/>
    <property type="evidence" value="ECO:0000318"/>
    <property type="project" value="GO_Central"/>
</dbReference>
<dbReference type="GO" id="GO:0020037">
    <property type="term" value="F:heme binding"/>
    <property type="evidence" value="ECO:0007669"/>
    <property type="project" value="InterPro"/>
</dbReference>
<dbReference type="GO" id="GO:0006182">
    <property type="term" value="P:cGMP biosynthetic process"/>
    <property type="evidence" value="ECO:0000318"/>
    <property type="project" value="GO_Central"/>
</dbReference>
<dbReference type="GO" id="GO:0019934">
    <property type="term" value="P:cGMP-mediated signaling"/>
    <property type="evidence" value="ECO:0000318"/>
    <property type="project" value="GO_Central"/>
</dbReference>
<dbReference type="GO" id="GO:0038060">
    <property type="term" value="P:nitric oxide-cGMP-mediated signaling"/>
    <property type="evidence" value="ECO:0007669"/>
    <property type="project" value="Ensembl"/>
</dbReference>
<dbReference type="GO" id="GO:0070482">
    <property type="term" value="P:response to oxygen levels"/>
    <property type="evidence" value="ECO:0000318"/>
    <property type="project" value="GO_Central"/>
</dbReference>
<dbReference type="CDD" id="cd07302">
    <property type="entry name" value="CHD"/>
    <property type="match status" value="1"/>
</dbReference>
<dbReference type="FunFam" id="3.30.450.260:FF:000002">
    <property type="entry name" value="guanylate cyclase soluble subunit alpha-2"/>
    <property type="match status" value="1"/>
</dbReference>
<dbReference type="FunFam" id="3.30.70.1230:FF:000007">
    <property type="entry name" value="Guanylate cyclase soluble subunit alpha-3"/>
    <property type="match status" value="1"/>
</dbReference>
<dbReference type="FunFam" id="3.90.1520.10:FF:000002">
    <property type="entry name" value="Guanylate cyclase soluble subunit alpha-3 isoform A"/>
    <property type="match status" value="1"/>
</dbReference>
<dbReference type="Gene3D" id="6.10.250.780">
    <property type="match status" value="1"/>
</dbReference>
<dbReference type="Gene3D" id="3.90.1520.10">
    <property type="entry name" value="H-NOX domain"/>
    <property type="match status" value="1"/>
</dbReference>
<dbReference type="Gene3D" id="3.30.450.260">
    <property type="entry name" value="Haem NO binding associated domain"/>
    <property type="match status" value="1"/>
</dbReference>
<dbReference type="Gene3D" id="3.30.70.1230">
    <property type="entry name" value="Nucleotide cyclase"/>
    <property type="match status" value="1"/>
</dbReference>
<dbReference type="InterPro" id="IPR001054">
    <property type="entry name" value="A/G_cyclase"/>
</dbReference>
<dbReference type="InterPro" id="IPR018297">
    <property type="entry name" value="A/G_cyclase_CS"/>
</dbReference>
<dbReference type="InterPro" id="IPR038158">
    <property type="entry name" value="H-NOX_domain_sf"/>
</dbReference>
<dbReference type="InterPro" id="IPR011645">
    <property type="entry name" value="HNOB_dom_associated"/>
</dbReference>
<dbReference type="InterPro" id="IPR042463">
    <property type="entry name" value="HNOB_dom_associated_sf"/>
</dbReference>
<dbReference type="InterPro" id="IPR024096">
    <property type="entry name" value="NO_sig/Golgi_transp_ligand-bd"/>
</dbReference>
<dbReference type="InterPro" id="IPR029787">
    <property type="entry name" value="Nucleotide_cyclase"/>
</dbReference>
<dbReference type="PANTHER" id="PTHR45655:SF4">
    <property type="entry name" value="GUANYLATE CYCLASE SOLUBLE SUBUNIT ALPHA-1"/>
    <property type="match status" value="1"/>
</dbReference>
<dbReference type="PANTHER" id="PTHR45655">
    <property type="entry name" value="GUANYLATE CYCLASE SOLUBLE SUBUNIT BETA-2"/>
    <property type="match status" value="1"/>
</dbReference>
<dbReference type="Pfam" id="PF00211">
    <property type="entry name" value="Guanylate_cyc"/>
    <property type="match status" value="1"/>
</dbReference>
<dbReference type="Pfam" id="PF07701">
    <property type="entry name" value="HNOBA"/>
    <property type="match status" value="1"/>
</dbReference>
<dbReference type="SMART" id="SM00044">
    <property type="entry name" value="CYCc"/>
    <property type="match status" value="1"/>
</dbReference>
<dbReference type="SUPFAM" id="SSF111126">
    <property type="entry name" value="Ligand-binding domain in the NO signalling and Golgi transport"/>
    <property type="match status" value="1"/>
</dbReference>
<dbReference type="SUPFAM" id="SSF55073">
    <property type="entry name" value="Nucleotide cyclase"/>
    <property type="match status" value="1"/>
</dbReference>
<dbReference type="PROSITE" id="PS00452">
    <property type="entry name" value="GUANYLATE_CYCLASE_1"/>
    <property type="match status" value="1"/>
</dbReference>
<dbReference type="PROSITE" id="PS50125">
    <property type="entry name" value="GUANYLATE_CYCLASE_2"/>
    <property type="match status" value="1"/>
</dbReference>
<comment type="catalytic activity">
    <reaction>
        <text>GTP = 3',5'-cyclic GMP + diphosphate</text>
        <dbReference type="Rhea" id="RHEA:13665"/>
        <dbReference type="ChEBI" id="CHEBI:33019"/>
        <dbReference type="ChEBI" id="CHEBI:37565"/>
        <dbReference type="ChEBI" id="CHEBI:57746"/>
        <dbReference type="EC" id="4.6.1.2"/>
    </reaction>
</comment>
<comment type="activity regulation">
    <text>Activated by nitric oxide in the presence of magnesium or manganese ions.</text>
</comment>
<comment type="subunit">
    <text>Heterodimer of an alpha and a beta chain.</text>
</comment>
<comment type="subcellular location">
    <subcellularLocation>
        <location>Cytoplasm</location>
    </subcellularLocation>
</comment>
<comment type="miscellaneous">
    <text>There are two types of guanylate cyclases: soluble forms and membrane-associated receptor forms.</text>
</comment>
<comment type="similarity">
    <text evidence="1">Belongs to the adenylyl cyclase class-4/guanylyl cyclase family.</text>
</comment>
<feature type="chain" id="PRO_0000074108" description="Guanylate cyclase soluble subunit alpha-1">
    <location>
        <begin position="1"/>
        <end position="691"/>
    </location>
</feature>
<feature type="domain" description="Guanylate cyclase" evidence="1">
    <location>
        <begin position="482"/>
        <end position="609"/>
    </location>
</feature>
<feature type="region of interest" description="Disordered" evidence="2">
    <location>
        <begin position="26"/>
        <end position="65"/>
    </location>
</feature>
<proteinExistence type="evidence at protein level"/>
<name>GCYA1_BOVIN</name>
<sequence>MFCAKLKDLQITGDCPFSLLAPGQVPREPLGEATGSGPASTPGQPGVCPGVPDKNPPGRLPRRKTSRSRVYLHTLAESICKLIFPEFERLNLALQRTLAKHKIKENRKSLEREDFEKIVVDQAIAAGVPVEIIKESLGEELFKICYEEDEYILGVVGGTLKDFLNSFSTLLKQSSHCQEAEKKGRFEDASILCLDKDPDVLYVYYFFPKRITSLILPGIIKAAARILYETEVEVSSTPSRFHQDCREFVDQPCELYSVHIRSARPHPPPGKPVSSLVIPASLFCKTFPFHFMLDRDMSILQLGHGIRRLMSRRDVQGKPHFDEYFEILTPKISQTFSGIMTMLNMQFLVRVRRWDNSMKKSSRVMDLKGQMIYMVESSSILFLGSPCVDRLEDFTGRGLYLSDIPIHNALRDVVLIGEQARAQDGLKKRLGKLKATLEQAHQALEEEKRKTVDLLCSIFPSEVARQLWQGHAVQAKRFGNVTMLFSDIVGFTAICSQCSPLQVITMLNALYTRFDRQCGELDVYKVETIGDAYCVAGGLHKESDTHAVQIALMALKMMELSHEVVSPHGEPIKMRIGLHSGSVFAGVVGVKMPRYCLFGNNVTLANKFESCSVPRKINVSPTTYRLLKDCPGFVFTPRSREELPPNFPSDIPGICHFLEAYQQGTTSKPWFQKKDVEEANANFLGKASGID</sequence>
<keyword id="KW-0141">cGMP biosynthesis</keyword>
<keyword id="KW-0963">Cytoplasm</keyword>
<keyword id="KW-0903">Direct protein sequencing</keyword>
<keyword id="KW-0342">GTP-binding</keyword>
<keyword id="KW-0456">Lyase</keyword>
<keyword id="KW-0547">Nucleotide-binding</keyword>
<keyword id="KW-1185">Reference proteome</keyword>
<gene>
    <name type="primary">GUCY1A1</name>
    <name type="synonym">GUC1A1</name>
</gene>
<organism>
    <name type="scientific">Bos taurus</name>
    <name type="common">Bovine</name>
    <dbReference type="NCBI Taxonomy" id="9913"/>
    <lineage>
        <taxon>Eukaryota</taxon>
        <taxon>Metazoa</taxon>
        <taxon>Chordata</taxon>
        <taxon>Craniata</taxon>
        <taxon>Vertebrata</taxon>
        <taxon>Euteleostomi</taxon>
        <taxon>Mammalia</taxon>
        <taxon>Eutheria</taxon>
        <taxon>Laurasiatheria</taxon>
        <taxon>Artiodactyla</taxon>
        <taxon>Ruminantia</taxon>
        <taxon>Pecora</taxon>
        <taxon>Bovidae</taxon>
        <taxon>Bovinae</taxon>
        <taxon>Bos</taxon>
    </lineage>
</organism>
<accession>P19687</accession>